<accession>Q9BM97</accession>
<comment type="function">
    <text evidence="1">JanA and janB regulate somatic sex differentiation.</text>
</comment>
<comment type="similarity">
    <text evidence="2">Belongs to the janus family.</text>
</comment>
<proteinExistence type="inferred from homology"/>
<gene>
    <name type="primary">janA</name>
</gene>
<organism evidence="3">
    <name type="scientific">Drosophila erecta</name>
    <name type="common">Fruit fly</name>
    <dbReference type="NCBI Taxonomy" id="7220"/>
    <lineage>
        <taxon>Eukaryota</taxon>
        <taxon>Metazoa</taxon>
        <taxon>Ecdysozoa</taxon>
        <taxon>Arthropoda</taxon>
        <taxon>Hexapoda</taxon>
        <taxon>Insecta</taxon>
        <taxon>Pterygota</taxon>
        <taxon>Neoptera</taxon>
        <taxon>Endopterygota</taxon>
        <taxon>Diptera</taxon>
        <taxon>Brachycera</taxon>
        <taxon>Muscomorpha</taxon>
        <taxon>Ephydroidea</taxon>
        <taxon>Drosophilidae</taxon>
        <taxon>Drosophila</taxon>
        <taxon>Sophophora</taxon>
    </lineage>
</organism>
<feature type="chain" id="PRO_0000206156" description="Sex-regulated protein janus-A">
    <location>
        <begin position="1"/>
        <end position="135"/>
    </location>
</feature>
<feature type="active site" description="Proton acceptor" evidence="1">
    <location>
        <position position="63"/>
    </location>
</feature>
<feature type="binding site" evidence="1">
    <location>
        <position position="37"/>
    </location>
    <ligand>
        <name>substrate</name>
    </ligand>
</feature>
<feature type="binding site" evidence="1">
    <location>
        <begin position="104"/>
        <end position="106"/>
    </location>
    <ligand>
        <name>substrate</name>
    </ligand>
</feature>
<keyword id="KW-0221">Differentiation</keyword>
<keyword id="KW-0726">Sexual differentiation</keyword>
<sequence>MNRFQLLSKGLRLIHKMSEEALAGVPLVHISPEGIFKYVMINVIDGGDASKAVIRGFADCTWHADIFDREEEVFKKLGLRAECPGGGRIEHNPDKKYLKVYGYSQGFGKADHAQTKRILATKYPDYTIETSDEGY</sequence>
<protein>
    <recommendedName>
        <fullName>Sex-regulated protein janus-A</fullName>
    </recommendedName>
</protein>
<name>JANA_DROER</name>
<evidence type="ECO:0000250" key="1"/>
<evidence type="ECO:0000305" key="2"/>
<evidence type="ECO:0000312" key="3">
    <source>
        <dbReference type="EMBL" id="AAG50364.1"/>
    </source>
</evidence>
<dbReference type="EMBL" id="AY013343">
    <property type="protein sequence ID" value="AAG50364.1"/>
    <property type="molecule type" value="Genomic_DNA"/>
</dbReference>
<dbReference type="SMR" id="Q9BM97"/>
<dbReference type="EnsemblMetazoa" id="FBtr0132024">
    <property type="protein sequence ID" value="FBpp0130516"/>
    <property type="gene ID" value="FBgn0043709"/>
</dbReference>
<dbReference type="EnsemblMetazoa" id="XM_001981219.3">
    <property type="protein sequence ID" value="XP_001981255.2"/>
    <property type="gene ID" value="LOC6554365"/>
</dbReference>
<dbReference type="GeneID" id="6554365"/>
<dbReference type="KEGG" id="der:6554365"/>
<dbReference type="eggNOG" id="ENOG502S4DR">
    <property type="taxonomic scope" value="Eukaryota"/>
</dbReference>
<dbReference type="OrthoDB" id="10249612at2759"/>
<dbReference type="GO" id="GO:0005829">
    <property type="term" value="C:cytosol"/>
    <property type="evidence" value="ECO:0007669"/>
    <property type="project" value="TreeGrafter"/>
</dbReference>
<dbReference type="GO" id="GO:0101006">
    <property type="term" value="F:protein histidine phosphatase activity"/>
    <property type="evidence" value="ECO:0007669"/>
    <property type="project" value="TreeGrafter"/>
</dbReference>
<dbReference type="GO" id="GO:0030154">
    <property type="term" value="P:cell differentiation"/>
    <property type="evidence" value="ECO:0007669"/>
    <property type="project" value="UniProtKB-KW"/>
</dbReference>
<dbReference type="GO" id="GO:0007548">
    <property type="term" value="P:sex differentiation"/>
    <property type="evidence" value="ECO:0000250"/>
    <property type="project" value="UniProtKB"/>
</dbReference>
<dbReference type="FunFam" id="3.50.20.20:FF:000001">
    <property type="entry name" value="14 kDa phosphohistidine phosphatase"/>
    <property type="match status" value="1"/>
</dbReference>
<dbReference type="Gene3D" id="3.50.20.20">
    <property type="entry name" value="Janus/Ocnus"/>
    <property type="match status" value="1"/>
</dbReference>
<dbReference type="InterPro" id="IPR007702">
    <property type="entry name" value="Janus"/>
</dbReference>
<dbReference type="InterPro" id="IPR038596">
    <property type="entry name" value="Janus_sf"/>
</dbReference>
<dbReference type="PANTHER" id="PTHR12258:SF5">
    <property type="entry name" value="BCDNA.GH02250-RELATED"/>
    <property type="match status" value="1"/>
</dbReference>
<dbReference type="PANTHER" id="PTHR12258">
    <property type="entry name" value="JANUS-A/JANUS-B"/>
    <property type="match status" value="1"/>
</dbReference>
<dbReference type="Pfam" id="PF05005">
    <property type="entry name" value="Ocnus"/>
    <property type="match status" value="1"/>
</dbReference>
<dbReference type="SUPFAM" id="SSF143724">
    <property type="entry name" value="PHP14-like"/>
    <property type="match status" value="1"/>
</dbReference>
<reference evidence="2" key="1">
    <citation type="journal article" date="2001" name="Mol. Biol. Evol.">
        <title>Molecular evolution of the ocnus and janus genes in the Drosophila melanogaster species subgroup.</title>
        <authorList>
            <person name="Parsch J."/>
            <person name="Meiklejohn C.D."/>
            <person name="Hauschteck-Jungen E."/>
            <person name="Hunziker P."/>
            <person name="Hartl D.L."/>
        </authorList>
    </citation>
    <scope>NUCLEOTIDE SEQUENCE [GENOMIC DNA]</scope>
</reference>